<sequence>MIFKVFYQENADEVPVREKTKTLYIEAESERDVRRKLQDRSINIEYIQPLEGAHLEYEKQSPNFQVLEISS</sequence>
<proteinExistence type="inferred from homology"/>
<gene>
    <name evidence="1" type="primary">rpoY</name>
    <name type="ordered locus">GTNG_0918</name>
</gene>
<comment type="function">
    <text evidence="1">A non-essential component of RNA polymerase (RNAP).</text>
</comment>
<comment type="catalytic activity">
    <reaction evidence="1">
        <text>RNA(n) + a ribonucleoside 5'-triphosphate = RNA(n+1) + diphosphate</text>
        <dbReference type="Rhea" id="RHEA:21248"/>
        <dbReference type="Rhea" id="RHEA-COMP:14527"/>
        <dbReference type="Rhea" id="RHEA-COMP:17342"/>
        <dbReference type="ChEBI" id="CHEBI:33019"/>
        <dbReference type="ChEBI" id="CHEBI:61557"/>
        <dbReference type="ChEBI" id="CHEBI:140395"/>
        <dbReference type="EC" id="2.7.7.6"/>
    </reaction>
</comment>
<comment type="subunit">
    <text evidence="1">RNAP is composed of a core of 2 alpha, a beta and a beta' subunit. The core is associated with a delta subunit, and at least one of epsilon or omega. When a sigma factor is associated with the core the holoenzyme is formed, which can initiate transcription.</text>
</comment>
<comment type="similarity">
    <text evidence="1">Belongs to the RNA polymerase subunit epsilon family.</text>
</comment>
<protein>
    <recommendedName>
        <fullName evidence="1">DNA-directed RNA polymerase subunit epsilon</fullName>
        <shortName evidence="1">RNAP epsilon subunit</shortName>
        <ecNumber evidence="1">2.7.7.6</ecNumber>
    </recommendedName>
    <alternativeName>
        <fullName evidence="1">RNA polymerase epsilon subunit</fullName>
    </alternativeName>
    <alternativeName>
        <fullName evidence="1">Transcriptase subunit epsilon</fullName>
    </alternativeName>
</protein>
<reference key="1">
    <citation type="journal article" date="2007" name="Proc. Natl. Acad. Sci. U.S.A.">
        <title>Genome and proteome of long-chain alkane degrading Geobacillus thermodenitrificans NG80-2 isolated from a deep-subsurface oil reservoir.</title>
        <authorList>
            <person name="Feng L."/>
            <person name="Wang W."/>
            <person name="Cheng J."/>
            <person name="Ren Y."/>
            <person name="Zhao G."/>
            <person name="Gao C."/>
            <person name="Tang Y."/>
            <person name="Liu X."/>
            <person name="Han W."/>
            <person name="Peng X."/>
            <person name="Liu R."/>
            <person name="Wang L."/>
        </authorList>
    </citation>
    <scope>NUCLEOTIDE SEQUENCE [LARGE SCALE GENOMIC DNA]</scope>
    <source>
        <strain>NG80-2</strain>
    </source>
</reference>
<organism>
    <name type="scientific">Geobacillus thermodenitrificans (strain NG80-2)</name>
    <dbReference type="NCBI Taxonomy" id="420246"/>
    <lineage>
        <taxon>Bacteria</taxon>
        <taxon>Bacillati</taxon>
        <taxon>Bacillota</taxon>
        <taxon>Bacilli</taxon>
        <taxon>Bacillales</taxon>
        <taxon>Anoxybacillaceae</taxon>
        <taxon>Geobacillus</taxon>
    </lineage>
</organism>
<feature type="chain" id="PRO_1000068865" description="DNA-directed RNA polymerase subunit epsilon">
    <location>
        <begin position="1"/>
        <end position="71"/>
    </location>
</feature>
<dbReference type="EC" id="2.7.7.6" evidence="1"/>
<dbReference type="EMBL" id="CP000557">
    <property type="protein sequence ID" value="ABO66296.1"/>
    <property type="molecule type" value="Genomic_DNA"/>
</dbReference>
<dbReference type="RefSeq" id="WP_008878754.1">
    <property type="nucleotide sequence ID" value="NC_009328.1"/>
</dbReference>
<dbReference type="SMR" id="A4ILU2"/>
<dbReference type="GeneID" id="87621488"/>
<dbReference type="KEGG" id="gtn:GTNG_0918"/>
<dbReference type="eggNOG" id="COG5503">
    <property type="taxonomic scope" value="Bacteria"/>
</dbReference>
<dbReference type="HOGENOM" id="CLU_187518_1_0_9"/>
<dbReference type="Proteomes" id="UP000001578">
    <property type="component" value="Chromosome"/>
</dbReference>
<dbReference type="GO" id="GO:0000428">
    <property type="term" value="C:DNA-directed RNA polymerase complex"/>
    <property type="evidence" value="ECO:0007669"/>
    <property type="project" value="UniProtKB-KW"/>
</dbReference>
<dbReference type="GO" id="GO:0003677">
    <property type="term" value="F:DNA binding"/>
    <property type="evidence" value="ECO:0007669"/>
    <property type="project" value="UniProtKB-UniRule"/>
</dbReference>
<dbReference type="GO" id="GO:0003899">
    <property type="term" value="F:DNA-directed RNA polymerase activity"/>
    <property type="evidence" value="ECO:0007669"/>
    <property type="project" value="UniProtKB-UniRule"/>
</dbReference>
<dbReference type="GO" id="GO:0006351">
    <property type="term" value="P:DNA-templated transcription"/>
    <property type="evidence" value="ECO:0007669"/>
    <property type="project" value="UniProtKB-UniRule"/>
</dbReference>
<dbReference type="Gene3D" id="3.10.20.730">
    <property type="entry name" value="RNAP, epsilon subunit-like"/>
    <property type="match status" value="1"/>
</dbReference>
<dbReference type="HAMAP" id="MF_01553">
    <property type="entry name" value="RNApol_bact_RpoY"/>
    <property type="match status" value="1"/>
</dbReference>
<dbReference type="InterPro" id="IPR009907">
    <property type="entry name" value="RpoY"/>
</dbReference>
<dbReference type="NCBIfam" id="NF010188">
    <property type="entry name" value="PRK13667.1"/>
    <property type="match status" value="1"/>
</dbReference>
<dbReference type="Pfam" id="PF07288">
    <property type="entry name" value="RpoY"/>
    <property type="match status" value="1"/>
</dbReference>
<keyword id="KW-0240">DNA-directed RNA polymerase</keyword>
<keyword id="KW-0548">Nucleotidyltransferase</keyword>
<keyword id="KW-0804">Transcription</keyword>
<keyword id="KW-0808">Transferase</keyword>
<accession>A4ILU2</accession>
<evidence type="ECO:0000255" key="1">
    <source>
        <dbReference type="HAMAP-Rule" id="MF_01553"/>
    </source>
</evidence>
<name>RPOY_GEOTN</name>